<gene>
    <name evidence="1" type="primary">rplW</name>
    <name type="ordered locus">Csal_0423</name>
</gene>
<keyword id="KW-1185">Reference proteome</keyword>
<keyword id="KW-0687">Ribonucleoprotein</keyword>
<keyword id="KW-0689">Ribosomal protein</keyword>
<keyword id="KW-0694">RNA-binding</keyword>
<keyword id="KW-0699">rRNA-binding</keyword>
<feature type="chain" id="PRO_0000272731" description="Large ribosomal subunit protein uL23">
    <location>
        <begin position="1"/>
        <end position="98"/>
    </location>
</feature>
<comment type="function">
    <text evidence="1">One of the early assembly proteins it binds 23S rRNA. One of the proteins that surrounds the polypeptide exit tunnel on the outside of the ribosome. Forms the main docking site for trigger factor binding to the ribosome.</text>
</comment>
<comment type="subunit">
    <text evidence="1">Part of the 50S ribosomal subunit. Contacts protein L29, and trigger factor when it is bound to the ribosome.</text>
</comment>
<comment type="similarity">
    <text evidence="1">Belongs to the universal ribosomal protein uL23 family.</text>
</comment>
<accession>Q1R0H3</accession>
<evidence type="ECO:0000255" key="1">
    <source>
        <dbReference type="HAMAP-Rule" id="MF_01369"/>
    </source>
</evidence>
<evidence type="ECO:0000305" key="2"/>
<name>RL23_CHRSD</name>
<reference key="1">
    <citation type="journal article" date="2011" name="Stand. Genomic Sci.">
        <title>Complete genome sequence of the halophilic and highly halotolerant Chromohalobacter salexigens type strain (1H11(T)).</title>
        <authorList>
            <person name="Copeland A."/>
            <person name="O'Connor K."/>
            <person name="Lucas S."/>
            <person name="Lapidus A."/>
            <person name="Berry K.W."/>
            <person name="Detter J.C."/>
            <person name="Del Rio T.G."/>
            <person name="Hammon N."/>
            <person name="Dalin E."/>
            <person name="Tice H."/>
            <person name="Pitluck S."/>
            <person name="Bruce D."/>
            <person name="Goodwin L."/>
            <person name="Han C."/>
            <person name="Tapia R."/>
            <person name="Saunders E."/>
            <person name="Schmutz J."/>
            <person name="Brettin T."/>
            <person name="Larimer F."/>
            <person name="Land M."/>
            <person name="Hauser L."/>
            <person name="Vargas C."/>
            <person name="Nieto J.J."/>
            <person name="Kyrpides N.C."/>
            <person name="Ivanova N."/>
            <person name="Goker M."/>
            <person name="Klenk H.P."/>
            <person name="Csonka L.N."/>
            <person name="Woyke T."/>
        </authorList>
    </citation>
    <scope>NUCLEOTIDE SEQUENCE [LARGE SCALE GENOMIC DNA]</scope>
    <source>
        <strain>ATCC BAA-138 / DSM 3043 / CIP 106854 / NCIMB 13768 / 1H11</strain>
    </source>
</reference>
<dbReference type="EMBL" id="CP000285">
    <property type="protein sequence ID" value="ABE57785.1"/>
    <property type="molecule type" value="Genomic_DNA"/>
</dbReference>
<dbReference type="RefSeq" id="WP_011505731.1">
    <property type="nucleotide sequence ID" value="NC_007963.1"/>
</dbReference>
<dbReference type="SMR" id="Q1R0H3"/>
<dbReference type="STRING" id="290398.Csal_0423"/>
<dbReference type="GeneID" id="95333176"/>
<dbReference type="KEGG" id="csa:Csal_0423"/>
<dbReference type="eggNOG" id="COG0089">
    <property type="taxonomic scope" value="Bacteria"/>
</dbReference>
<dbReference type="HOGENOM" id="CLU_037562_3_1_6"/>
<dbReference type="OrthoDB" id="9793353at2"/>
<dbReference type="Proteomes" id="UP000000239">
    <property type="component" value="Chromosome"/>
</dbReference>
<dbReference type="GO" id="GO:1990904">
    <property type="term" value="C:ribonucleoprotein complex"/>
    <property type="evidence" value="ECO:0007669"/>
    <property type="project" value="UniProtKB-KW"/>
</dbReference>
<dbReference type="GO" id="GO:0005840">
    <property type="term" value="C:ribosome"/>
    <property type="evidence" value="ECO:0007669"/>
    <property type="project" value="UniProtKB-KW"/>
</dbReference>
<dbReference type="GO" id="GO:0019843">
    <property type="term" value="F:rRNA binding"/>
    <property type="evidence" value="ECO:0007669"/>
    <property type="project" value="UniProtKB-UniRule"/>
</dbReference>
<dbReference type="GO" id="GO:0003735">
    <property type="term" value="F:structural constituent of ribosome"/>
    <property type="evidence" value="ECO:0007669"/>
    <property type="project" value="InterPro"/>
</dbReference>
<dbReference type="GO" id="GO:0006412">
    <property type="term" value="P:translation"/>
    <property type="evidence" value="ECO:0007669"/>
    <property type="project" value="UniProtKB-UniRule"/>
</dbReference>
<dbReference type="FunFam" id="3.30.70.330:FF:000001">
    <property type="entry name" value="50S ribosomal protein L23"/>
    <property type="match status" value="1"/>
</dbReference>
<dbReference type="Gene3D" id="3.30.70.330">
    <property type="match status" value="1"/>
</dbReference>
<dbReference type="HAMAP" id="MF_01369_B">
    <property type="entry name" value="Ribosomal_uL23_B"/>
    <property type="match status" value="1"/>
</dbReference>
<dbReference type="InterPro" id="IPR012677">
    <property type="entry name" value="Nucleotide-bd_a/b_plait_sf"/>
</dbReference>
<dbReference type="InterPro" id="IPR013025">
    <property type="entry name" value="Ribosomal_uL23-like"/>
</dbReference>
<dbReference type="InterPro" id="IPR012678">
    <property type="entry name" value="Ribosomal_uL23/eL15/eS24_sf"/>
</dbReference>
<dbReference type="InterPro" id="IPR001014">
    <property type="entry name" value="Ribosomal_uL23_CS"/>
</dbReference>
<dbReference type="NCBIfam" id="NF004359">
    <property type="entry name" value="PRK05738.1-3"/>
    <property type="match status" value="1"/>
</dbReference>
<dbReference type="NCBIfam" id="NF004363">
    <property type="entry name" value="PRK05738.2-4"/>
    <property type="match status" value="1"/>
</dbReference>
<dbReference type="PANTHER" id="PTHR11620">
    <property type="entry name" value="60S RIBOSOMAL PROTEIN L23A"/>
    <property type="match status" value="1"/>
</dbReference>
<dbReference type="Pfam" id="PF00276">
    <property type="entry name" value="Ribosomal_L23"/>
    <property type="match status" value="1"/>
</dbReference>
<dbReference type="SUPFAM" id="SSF54189">
    <property type="entry name" value="Ribosomal proteins S24e, L23 and L15e"/>
    <property type="match status" value="1"/>
</dbReference>
<dbReference type="PROSITE" id="PS00050">
    <property type="entry name" value="RIBOSOMAL_L23"/>
    <property type="match status" value="1"/>
</dbReference>
<organism>
    <name type="scientific">Chromohalobacter salexigens (strain ATCC BAA-138 / DSM 3043 / CIP 106854 / NCIMB 13768 / 1H11)</name>
    <dbReference type="NCBI Taxonomy" id="290398"/>
    <lineage>
        <taxon>Bacteria</taxon>
        <taxon>Pseudomonadati</taxon>
        <taxon>Pseudomonadota</taxon>
        <taxon>Gammaproteobacteria</taxon>
        <taxon>Oceanospirillales</taxon>
        <taxon>Halomonadaceae</taxon>
        <taxon>Chromohalobacter</taxon>
    </lineage>
</organism>
<sequence>MNQERVFKVLLGPHMTEKAAFAAENNQYVFKVAQDATKPEIKKAVEALFEKKVAGVQVLNVKGKTKRTQHGLGLRKGYRKAYVTLAAGETLEDFSGAE</sequence>
<proteinExistence type="inferred from homology"/>
<protein>
    <recommendedName>
        <fullName evidence="1">Large ribosomal subunit protein uL23</fullName>
    </recommendedName>
    <alternativeName>
        <fullName evidence="2">50S ribosomal protein L23</fullName>
    </alternativeName>
</protein>